<protein>
    <recommendedName>
        <fullName>DNA polymerase catalytic subunit</fullName>
        <ecNumber>2.7.7.7</ecNumber>
    </recommendedName>
</protein>
<organism>
    <name type="scientific">Murid herpesvirus 1 (strain Smith)</name>
    <name type="common">MuHV-1</name>
    <name type="synonym">Mouse cytomegalovirus</name>
    <dbReference type="NCBI Taxonomy" id="10367"/>
    <lineage>
        <taxon>Viruses</taxon>
        <taxon>Duplodnaviria</taxon>
        <taxon>Heunggongvirae</taxon>
        <taxon>Peploviricota</taxon>
        <taxon>Herviviricetes</taxon>
        <taxon>Herpesvirales</taxon>
        <taxon>Orthoherpesviridae</taxon>
        <taxon>Betaherpesvirinae</taxon>
        <taxon>Muromegalovirus</taxon>
        <taxon>Muromegalovirus muridbeta1</taxon>
        <taxon>Murid herpesvirus 1</taxon>
    </lineage>
</organism>
<reference key="1">
    <citation type="journal article" date="1991" name="Virology">
        <title>Transcription analysis and sequence of the putative murine cytomegalovirus DNA polymerase gene.</title>
        <authorList>
            <person name="Elliott R."/>
            <person name="Clark C."/>
            <person name="Jaquish D."/>
            <person name="Spector D.H."/>
        </authorList>
    </citation>
    <scope>NUCLEOTIDE SEQUENCE [GENOMIC DNA]</scope>
</reference>
<reference key="2">
    <citation type="journal article" date="1996" name="J. Virol.">
        <title>Analysis of the complete DNA sequence of murine cytomegalovirus.</title>
        <authorList>
            <person name="Rawlinson W.D."/>
            <person name="Farrell H.E."/>
            <person name="Barrell B.G."/>
        </authorList>
    </citation>
    <scope>NUCLEOTIDE SEQUENCE [LARGE SCALE GENOMIC DNA]</scope>
</reference>
<comment type="catalytic activity">
    <reaction>
        <text>DNA(n) + a 2'-deoxyribonucleoside 5'-triphosphate = DNA(n+1) + diphosphate</text>
        <dbReference type="Rhea" id="RHEA:22508"/>
        <dbReference type="Rhea" id="RHEA-COMP:17339"/>
        <dbReference type="Rhea" id="RHEA-COMP:17340"/>
        <dbReference type="ChEBI" id="CHEBI:33019"/>
        <dbReference type="ChEBI" id="CHEBI:61560"/>
        <dbReference type="ChEBI" id="CHEBI:173112"/>
        <dbReference type="EC" id="2.7.7.7"/>
    </reaction>
</comment>
<comment type="subcellular location">
    <subcellularLocation>
        <location>Host nucleus</location>
    </subcellularLocation>
</comment>
<comment type="similarity">
    <text evidence="2">Belongs to the DNA polymerase type-B family.</text>
</comment>
<dbReference type="EC" id="2.7.7.7"/>
<dbReference type="EMBL" id="M73549">
    <property type="protein sequence ID" value="AAA45940.1"/>
    <property type="molecule type" value="Genomic_DNA"/>
</dbReference>
<dbReference type="EMBL" id="U68299">
    <property type="status" value="NOT_ANNOTATED_CDS"/>
    <property type="molecule type" value="Genomic_DNA"/>
</dbReference>
<dbReference type="PIR" id="B40780">
    <property type="entry name" value="DJBEMC"/>
</dbReference>
<dbReference type="SMR" id="P27172"/>
<dbReference type="Proteomes" id="UP000008774">
    <property type="component" value="Segment"/>
</dbReference>
<dbReference type="GO" id="GO:0042025">
    <property type="term" value="C:host cell nucleus"/>
    <property type="evidence" value="ECO:0007669"/>
    <property type="project" value="UniProtKB-SubCell"/>
</dbReference>
<dbReference type="GO" id="GO:0003677">
    <property type="term" value="F:DNA binding"/>
    <property type="evidence" value="ECO:0007669"/>
    <property type="project" value="UniProtKB-KW"/>
</dbReference>
<dbReference type="GO" id="GO:0003887">
    <property type="term" value="F:DNA-directed DNA polymerase activity"/>
    <property type="evidence" value="ECO:0007669"/>
    <property type="project" value="UniProtKB-KW"/>
</dbReference>
<dbReference type="GO" id="GO:0000166">
    <property type="term" value="F:nucleotide binding"/>
    <property type="evidence" value="ECO:0007669"/>
    <property type="project" value="InterPro"/>
</dbReference>
<dbReference type="GO" id="GO:0006261">
    <property type="term" value="P:DNA-templated DNA replication"/>
    <property type="evidence" value="ECO:0007669"/>
    <property type="project" value="TreeGrafter"/>
</dbReference>
<dbReference type="GO" id="GO:0039693">
    <property type="term" value="P:viral DNA genome replication"/>
    <property type="evidence" value="ECO:0007669"/>
    <property type="project" value="UniProtKB-KW"/>
</dbReference>
<dbReference type="Gene3D" id="1.10.132.60">
    <property type="entry name" value="DNA polymerase family B, C-terminal domain"/>
    <property type="match status" value="1"/>
</dbReference>
<dbReference type="Gene3D" id="3.30.342.10">
    <property type="entry name" value="DNA Polymerase, chain B, domain 1"/>
    <property type="match status" value="1"/>
</dbReference>
<dbReference type="Gene3D" id="1.10.287.690">
    <property type="entry name" value="Helix hairpin bin"/>
    <property type="match status" value="1"/>
</dbReference>
<dbReference type="Gene3D" id="3.90.1600.10">
    <property type="entry name" value="Palm domain of DNA polymerase"/>
    <property type="match status" value="1"/>
</dbReference>
<dbReference type="Gene3D" id="3.30.420.10">
    <property type="entry name" value="Ribonuclease H-like superfamily/Ribonuclease H"/>
    <property type="match status" value="1"/>
</dbReference>
<dbReference type="InterPro" id="IPR006172">
    <property type="entry name" value="DNA-dir_DNA_pol_B"/>
</dbReference>
<dbReference type="InterPro" id="IPR017964">
    <property type="entry name" value="DNA-dir_DNA_pol_B_CS"/>
</dbReference>
<dbReference type="InterPro" id="IPR006133">
    <property type="entry name" value="DNA-dir_DNA_pol_B_exonuc"/>
</dbReference>
<dbReference type="InterPro" id="IPR006134">
    <property type="entry name" value="DNA-dir_DNA_pol_B_multi_dom"/>
</dbReference>
<dbReference type="InterPro" id="IPR043502">
    <property type="entry name" value="DNA/RNA_pol_sf"/>
</dbReference>
<dbReference type="InterPro" id="IPR042087">
    <property type="entry name" value="DNA_pol_B_thumb"/>
</dbReference>
<dbReference type="InterPro" id="IPR023211">
    <property type="entry name" value="DNA_pol_palm_dom_sf"/>
</dbReference>
<dbReference type="InterPro" id="IPR050240">
    <property type="entry name" value="DNA_pol_type-B"/>
</dbReference>
<dbReference type="InterPro" id="IPR012337">
    <property type="entry name" value="RNaseH-like_sf"/>
</dbReference>
<dbReference type="InterPro" id="IPR036397">
    <property type="entry name" value="RNaseH_sf"/>
</dbReference>
<dbReference type="PANTHER" id="PTHR10322">
    <property type="entry name" value="DNA POLYMERASE CATALYTIC SUBUNIT"/>
    <property type="match status" value="1"/>
</dbReference>
<dbReference type="PANTHER" id="PTHR10322:SF23">
    <property type="entry name" value="DNA POLYMERASE DELTA CATALYTIC SUBUNIT"/>
    <property type="match status" value="1"/>
</dbReference>
<dbReference type="Pfam" id="PF00136">
    <property type="entry name" value="DNA_pol_B"/>
    <property type="match status" value="1"/>
</dbReference>
<dbReference type="Pfam" id="PF03104">
    <property type="entry name" value="DNA_pol_B_exo1"/>
    <property type="match status" value="1"/>
</dbReference>
<dbReference type="PRINTS" id="PR00106">
    <property type="entry name" value="DNAPOLB"/>
</dbReference>
<dbReference type="SMART" id="SM00486">
    <property type="entry name" value="POLBc"/>
    <property type="match status" value="1"/>
</dbReference>
<dbReference type="SUPFAM" id="SSF56672">
    <property type="entry name" value="DNA/RNA polymerases"/>
    <property type="match status" value="1"/>
</dbReference>
<dbReference type="SUPFAM" id="SSF53098">
    <property type="entry name" value="Ribonuclease H-like"/>
    <property type="match status" value="1"/>
</dbReference>
<dbReference type="PROSITE" id="PS00116">
    <property type="entry name" value="DNA_POLYMERASE_B"/>
    <property type="match status" value="1"/>
</dbReference>
<proteinExistence type="inferred from homology"/>
<accession>P27172</accession>
<keyword id="KW-0235">DNA replication</keyword>
<keyword id="KW-0238">DNA-binding</keyword>
<keyword id="KW-0239">DNA-directed DNA polymerase</keyword>
<keyword id="KW-1048">Host nucleus</keyword>
<keyword id="KW-0548">Nucleotidyltransferase</keyword>
<keyword id="KW-1185">Reference proteome</keyword>
<keyword id="KW-0808">Transferase</keyword>
<keyword id="KW-1194">Viral DNA replication</keyword>
<feature type="chain" id="PRO_0000046508" description="DNA polymerase catalytic subunit">
    <location>
        <begin position="1"/>
        <end position="1097"/>
    </location>
</feature>
<feature type="region of interest" description="Disordered" evidence="1">
    <location>
        <begin position="1069"/>
        <end position="1097"/>
    </location>
</feature>
<feature type="compositionally biased region" description="Basic and acidic residues" evidence="1">
    <location>
        <begin position="1078"/>
        <end position="1097"/>
    </location>
</feature>
<name>DPOL_MUHVS</name>
<organismHost>
    <name type="scientific">Mus musculus</name>
    <name type="common">Mouse</name>
    <dbReference type="NCBI Taxonomy" id="10090"/>
</organismHost>
<evidence type="ECO:0000256" key="1">
    <source>
        <dbReference type="SAM" id="MobiDB-lite"/>
    </source>
</evidence>
<evidence type="ECO:0000305" key="2"/>
<gene>
    <name type="primary">UL54</name>
</gene>
<sequence length="1097" mass="123574">MDTCVETFFNPYLRRKPRRDWRRCEDNNKNFLQVVPRGVLYDGATGLIKVQSGMEPRMFYAEKEYVLNPDKPWPTLRTRGWCRGPYSDDVRFHTYDQVVNLVLADSDEQISPRWNSHVVPAGNVIRMFGATDEGVSVCVNVFGQKAYFYCERMQSEDLKNTVYDIADKVPEPCSPFSVSISPVTKSSFYGYGLGHIPNLYRLSFNNWNMCRKIGKRMLEEGRKVYELGVDPLARFLIDRKIPSFGWCLARRYSVRAAGYVSRAQLEIDCDVADILPIEEQSNWPFYRCLSFDIECMSGTGAFPAAENVDDIIIQISCVCFGVGEMVHHAYDVHADLSTPAVPENHLFTIGPCAPIPDVKIYTFPSEYEMLRGFFIFLSWYSPEFITGYNINGFDIKYILTRAEKLYKMDVGQFTKLRRGGRMFVFSPEKGKAGFGTSNTVKVFWSGTVVLDMYPVCTAKASSPNYKLDTMAEIYLKKKKDDLSYKEIPVQFSAGDEGRAPGGKYCLQDAVLVRELFEMLAFHFEAAAIARLARIPLRKVIFDGQQIRIYTCLLEECSGRDMILPNMPSLGHGAAAAIEEAAAGGEGDETSEGENSNNSRTVGYQGATVLEPECGFHHVPVCVFDFASLYPSIIMSNNLCYSTLLVEGSPEVPEKDVLRVEIGDQCHRFVRENVHRSLLAELLVRWLTQRKLVREAMKQCTNEMQRMIMDKQQLALKVTCNAFYGFTGVAAGMLPCLPIAASITKIGRDMLLATAGHIEDRCNRPDFLRTVLGLPPEAIDPEALRVKIIYGDTDSVFAAFYGIDKEALLKAVGALAANVTNALFKEPVRLEFEKMFVSLMMICKKRYIGKVHGSQNLSMKGVDLVRRTACGFVKAVVSDVLHMVFNDETVSEGTMKLSRMTFDDLKKNGIPCEFGPVVSRLCRARDDLHLKKVPVPELTLSSVLSQELSCYKQKNLPHLAVIRRLAARKEELPAVGDRVEYVLTLPDGCKKNVPNYEIAEDPRHVVEAKLSINAEKYYEQVVKAVTNTLMPVFPRDMPKREKFFSLVVPQRIYIPDQFLHLCGNVNELARGGDDSDGGDSEKENMDTERSSSHEAMET</sequence>